<organism>
    <name type="scientific">Cytophaga hutchinsonii (strain ATCC 33406 / DSM 1761 / CIP 103989 / NBRC 15051 / NCIMB 9469 / D465)</name>
    <dbReference type="NCBI Taxonomy" id="269798"/>
    <lineage>
        <taxon>Bacteria</taxon>
        <taxon>Pseudomonadati</taxon>
        <taxon>Bacteroidota</taxon>
        <taxon>Cytophagia</taxon>
        <taxon>Cytophagales</taxon>
        <taxon>Cytophagaceae</taxon>
        <taxon>Cytophaga</taxon>
    </lineage>
</organism>
<evidence type="ECO:0000255" key="1">
    <source>
        <dbReference type="HAMAP-Rule" id="MF_00238"/>
    </source>
</evidence>
<protein>
    <recommendedName>
        <fullName evidence="1">Cytidylate kinase</fullName>
        <shortName evidence="1">CK</shortName>
        <ecNumber evidence="1">2.7.4.25</ecNumber>
    </recommendedName>
    <alternativeName>
        <fullName evidence="1">Cytidine monophosphate kinase</fullName>
        <shortName evidence="1">CMP kinase</shortName>
    </alternativeName>
</protein>
<dbReference type="EC" id="2.7.4.25" evidence="1"/>
<dbReference type="EMBL" id="CP000383">
    <property type="protein sequence ID" value="ABG57380.1"/>
    <property type="molecule type" value="Genomic_DNA"/>
</dbReference>
<dbReference type="RefSeq" id="WP_011583496.1">
    <property type="nucleotide sequence ID" value="NC_008255.1"/>
</dbReference>
<dbReference type="SMR" id="Q11YY6"/>
<dbReference type="STRING" id="269798.CHU_0086"/>
<dbReference type="KEGG" id="chu:CHU_0086"/>
<dbReference type="eggNOG" id="COG0283">
    <property type="taxonomic scope" value="Bacteria"/>
</dbReference>
<dbReference type="HOGENOM" id="CLU_079959_0_2_10"/>
<dbReference type="OrthoDB" id="9807434at2"/>
<dbReference type="Proteomes" id="UP000001822">
    <property type="component" value="Chromosome"/>
</dbReference>
<dbReference type="GO" id="GO:0005829">
    <property type="term" value="C:cytosol"/>
    <property type="evidence" value="ECO:0007669"/>
    <property type="project" value="TreeGrafter"/>
</dbReference>
<dbReference type="GO" id="GO:0005524">
    <property type="term" value="F:ATP binding"/>
    <property type="evidence" value="ECO:0007669"/>
    <property type="project" value="UniProtKB-UniRule"/>
</dbReference>
<dbReference type="GO" id="GO:0036430">
    <property type="term" value="F:CMP kinase activity"/>
    <property type="evidence" value="ECO:0007669"/>
    <property type="project" value="RHEA"/>
</dbReference>
<dbReference type="GO" id="GO:0036431">
    <property type="term" value="F:dCMP kinase activity"/>
    <property type="evidence" value="ECO:0007669"/>
    <property type="project" value="RHEA"/>
</dbReference>
<dbReference type="GO" id="GO:0015949">
    <property type="term" value="P:nucleobase-containing small molecule interconversion"/>
    <property type="evidence" value="ECO:0007669"/>
    <property type="project" value="TreeGrafter"/>
</dbReference>
<dbReference type="GO" id="GO:0006220">
    <property type="term" value="P:pyrimidine nucleotide metabolic process"/>
    <property type="evidence" value="ECO:0007669"/>
    <property type="project" value="UniProtKB-UniRule"/>
</dbReference>
<dbReference type="CDD" id="cd02020">
    <property type="entry name" value="CMPK"/>
    <property type="match status" value="1"/>
</dbReference>
<dbReference type="Gene3D" id="3.40.50.300">
    <property type="entry name" value="P-loop containing nucleotide triphosphate hydrolases"/>
    <property type="match status" value="1"/>
</dbReference>
<dbReference type="HAMAP" id="MF_00238">
    <property type="entry name" value="Cytidyl_kinase_type1"/>
    <property type="match status" value="1"/>
</dbReference>
<dbReference type="InterPro" id="IPR003136">
    <property type="entry name" value="Cytidylate_kin"/>
</dbReference>
<dbReference type="InterPro" id="IPR011994">
    <property type="entry name" value="Cytidylate_kinase_dom"/>
</dbReference>
<dbReference type="InterPro" id="IPR027417">
    <property type="entry name" value="P-loop_NTPase"/>
</dbReference>
<dbReference type="NCBIfam" id="TIGR00017">
    <property type="entry name" value="cmk"/>
    <property type="match status" value="1"/>
</dbReference>
<dbReference type="PANTHER" id="PTHR21299:SF2">
    <property type="entry name" value="CYTIDYLATE KINASE"/>
    <property type="match status" value="1"/>
</dbReference>
<dbReference type="PANTHER" id="PTHR21299">
    <property type="entry name" value="CYTIDYLATE KINASE/PANTOATE-BETA-ALANINE LIGASE"/>
    <property type="match status" value="1"/>
</dbReference>
<dbReference type="Pfam" id="PF02224">
    <property type="entry name" value="Cytidylate_kin"/>
    <property type="match status" value="1"/>
</dbReference>
<dbReference type="SUPFAM" id="SSF52540">
    <property type="entry name" value="P-loop containing nucleoside triphosphate hydrolases"/>
    <property type="match status" value="1"/>
</dbReference>
<reference key="1">
    <citation type="journal article" date="2007" name="Appl. Environ. Microbiol.">
        <title>Genome sequence of the cellulolytic gliding bacterium Cytophaga hutchinsonii.</title>
        <authorList>
            <person name="Xie G."/>
            <person name="Bruce D.C."/>
            <person name="Challacombe J.F."/>
            <person name="Chertkov O."/>
            <person name="Detter J.C."/>
            <person name="Gilna P."/>
            <person name="Han C.S."/>
            <person name="Lucas S."/>
            <person name="Misra M."/>
            <person name="Myers G.L."/>
            <person name="Richardson P."/>
            <person name="Tapia R."/>
            <person name="Thayer N."/>
            <person name="Thompson L.S."/>
            <person name="Brettin T.S."/>
            <person name="Henrissat B."/>
            <person name="Wilson D.B."/>
            <person name="McBride M.J."/>
        </authorList>
    </citation>
    <scope>NUCLEOTIDE SEQUENCE [LARGE SCALE GENOMIC DNA]</scope>
    <source>
        <strain>ATCC 33406 / DSM 1761 / JCM 20678 / CIP 103989 / IAM 12607 / NBRC 15051 / NCIMB 9469 / D465</strain>
    </source>
</reference>
<gene>
    <name evidence="1" type="primary">cmk</name>
    <name type="ordered locus">CHU_0086</name>
</gene>
<feature type="chain" id="PRO_1000048213" description="Cytidylate kinase">
    <location>
        <begin position="1"/>
        <end position="234"/>
    </location>
</feature>
<feature type="binding site" evidence="1">
    <location>
        <begin position="10"/>
        <end position="18"/>
    </location>
    <ligand>
        <name>ATP</name>
        <dbReference type="ChEBI" id="CHEBI:30616"/>
    </ligand>
</feature>
<proteinExistence type="inferred from homology"/>
<accession>Q11YY6</accession>
<name>KCY_CYTH3</name>
<comment type="catalytic activity">
    <reaction evidence="1">
        <text>CMP + ATP = CDP + ADP</text>
        <dbReference type="Rhea" id="RHEA:11600"/>
        <dbReference type="ChEBI" id="CHEBI:30616"/>
        <dbReference type="ChEBI" id="CHEBI:58069"/>
        <dbReference type="ChEBI" id="CHEBI:60377"/>
        <dbReference type="ChEBI" id="CHEBI:456216"/>
        <dbReference type="EC" id="2.7.4.25"/>
    </reaction>
</comment>
<comment type="catalytic activity">
    <reaction evidence="1">
        <text>dCMP + ATP = dCDP + ADP</text>
        <dbReference type="Rhea" id="RHEA:25094"/>
        <dbReference type="ChEBI" id="CHEBI:30616"/>
        <dbReference type="ChEBI" id="CHEBI:57566"/>
        <dbReference type="ChEBI" id="CHEBI:58593"/>
        <dbReference type="ChEBI" id="CHEBI:456216"/>
        <dbReference type="EC" id="2.7.4.25"/>
    </reaction>
</comment>
<comment type="subcellular location">
    <subcellularLocation>
        <location evidence="1">Cytoplasm</location>
    </subcellularLocation>
</comment>
<comment type="similarity">
    <text evidence="1">Belongs to the cytidylate kinase family. Type 1 subfamily.</text>
</comment>
<sequence length="234" mass="26827">MKKIIVAIDGYSACGKSTTAKILAAKLGYVYIDTGAMYRSVALYFIQHYINSTNPKAVAEALNQIHISFVHNNKTETCETYLNGLNVESEIRKMYVSEKVSEVSAIPEVRKRMVELQQKMARKRGVVMDGRDIGTHVFPDAELKIFMVADMHVRAFRRQQELFERKQIIDLDDIIKNIESRDLMDTTREESPLRKASDAYEIDTTYITVEEQVDCIMNIAVGKMIELEYNIENI</sequence>
<keyword id="KW-0067">ATP-binding</keyword>
<keyword id="KW-0963">Cytoplasm</keyword>
<keyword id="KW-0418">Kinase</keyword>
<keyword id="KW-0547">Nucleotide-binding</keyword>
<keyword id="KW-1185">Reference proteome</keyword>
<keyword id="KW-0808">Transferase</keyword>